<proteinExistence type="inferred from homology"/>
<organism>
    <name type="scientific">Nocardioides sp. (strain ATCC BAA-499 / JS614)</name>
    <dbReference type="NCBI Taxonomy" id="196162"/>
    <lineage>
        <taxon>Bacteria</taxon>
        <taxon>Bacillati</taxon>
        <taxon>Actinomycetota</taxon>
        <taxon>Actinomycetes</taxon>
        <taxon>Propionibacteriales</taxon>
        <taxon>Nocardioidaceae</taxon>
        <taxon>Nocardioides</taxon>
    </lineage>
</organism>
<feature type="chain" id="PRO_0000400149" description="D-inositol 3-phosphate glycosyltransferase">
    <location>
        <begin position="1"/>
        <end position="458"/>
    </location>
</feature>
<feature type="region of interest" description="Disordered" evidence="2">
    <location>
        <begin position="1"/>
        <end position="29"/>
    </location>
</feature>
<feature type="binding site" evidence="1">
    <location>
        <position position="47"/>
    </location>
    <ligand>
        <name>1D-myo-inositol 3-phosphate</name>
        <dbReference type="ChEBI" id="CHEBI:58401"/>
    </ligand>
</feature>
<feature type="binding site" evidence="1">
    <location>
        <begin position="53"/>
        <end position="54"/>
    </location>
    <ligand>
        <name>UDP-N-acetyl-alpha-D-glucosamine</name>
        <dbReference type="ChEBI" id="CHEBI:57705"/>
    </ligand>
</feature>
<feature type="binding site" evidence="1">
    <location>
        <begin position="58"/>
        <end position="63"/>
    </location>
    <ligand>
        <name>1D-myo-inositol 3-phosphate</name>
        <dbReference type="ChEBI" id="CHEBI:58401"/>
    </ligand>
</feature>
<feature type="binding site" evidence="1">
    <location>
        <position position="61"/>
    </location>
    <ligand>
        <name>UDP-N-acetyl-alpha-D-glucosamine</name>
        <dbReference type="ChEBI" id="CHEBI:57705"/>
    </ligand>
</feature>
<feature type="binding site" evidence="1">
    <location>
        <position position="116"/>
    </location>
    <ligand>
        <name>1D-myo-inositol 3-phosphate</name>
        <dbReference type="ChEBI" id="CHEBI:58401"/>
    </ligand>
</feature>
<feature type="binding site" evidence="1">
    <location>
        <position position="149"/>
    </location>
    <ligand>
        <name>1D-myo-inositol 3-phosphate</name>
        <dbReference type="ChEBI" id="CHEBI:58401"/>
    </ligand>
</feature>
<feature type="binding site" evidence="1">
    <location>
        <position position="173"/>
    </location>
    <ligand>
        <name>1D-myo-inositol 3-phosphate</name>
        <dbReference type="ChEBI" id="CHEBI:58401"/>
    </ligand>
</feature>
<feature type="binding site" evidence="1">
    <location>
        <position position="193"/>
    </location>
    <ligand>
        <name>1D-myo-inositol 3-phosphate</name>
        <dbReference type="ChEBI" id="CHEBI:58401"/>
    </ligand>
</feature>
<feature type="binding site" evidence="1">
    <location>
        <position position="267"/>
    </location>
    <ligand>
        <name>UDP-N-acetyl-alpha-D-glucosamine</name>
        <dbReference type="ChEBI" id="CHEBI:57705"/>
    </ligand>
</feature>
<feature type="binding site" evidence="1">
    <location>
        <position position="272"/>
    </location>
    <ligand>
        <name>UDP-N-acetyl-alpha-D-glucosamine</name>
        <dbReference type="ChEBI" id="CHEBI:57705"/>
    </ligand>
</feature>
<feature type="binding site" evidence="1">
    <location>
        <position position="339"/>
    </location>
    <ligand>
        <name>UDP-N-acetyl-alpha-D-glucosamine</name>
        <dbReference type="ChEBI" id="CHEBI:57705"/>
    </ligand>
</feature>
<feature type="binding site" evidence="1">
    <location>
        <position position="351"/>
    </location>
    <ligand>
        <name>Mg(2+)</name>
        <dbReference type="ChEBI" id="CHEBI:18420"/>
    </ligand>
</feature>
<feature type="binding site" evidence="1">
    <location>
        <position position="361"/>
    </location>
    <ligand>
        <name>UDP-N-acetyl-alpha-D-glucosamine</name>
        <dbReference type="ChEBI" id="CHEBI:57705"/>
    </ligand>
</feature>
<feature type="binding site" evidence="1">
    <location>
        <position position="369"/>
    </location>
    <ligand>
        <name>UDP-N-acetyl-alpha-D-glucosamine</name>
        <dbReference type="ChEBI" id="CHEBI:57705"/>
    </ligand>
</feature>
<feature type="binding site" evidence="1">
    <location>
        <position position="375"/>
    </location>
    <ligand>
        <name>Mg(2+)</name>
        <dbReference type="ChEBI" id="CHEBI:18420"/>
    </ligand>
</feature>
<name>MSHA_NOCSJ</name>
<gene>
    <name evidence="1" type="primary">mshA</name>
    <name type="ordered locus">Noca_4050</name>
</gene>
<protein>
    <recommendedName>
        <fullName>D-inositol 3-phosphate glycosyltransferase</fullName>
        <ecNumber evidence="1">2.4.1.250</ecNumber>
    </recommendedName>
    <alternativeName>
        <fullName evidence="1">N-acetylglucosamine-inositol-phosphate N-acetylglucosaminyltransferase</fullName>
        <shortName evidence="1">GlcNAc-Ins-P N-acetylglucosaminyltransferase</shortName>
    </alternativeName>
</protein>
<sequence>MRADRPGHRSRGINPGPGMFTLVGPDERDDPEVAVDPIRRVAMISLHTSPLDQPGTGDAGGMNVYVIELSKRLAAQGIAVDIFTRATTSAVEPLVEAYDGVQVRHIHAGPFEGLTKAELPGQLCVFAREVLRAEAAQPVGHYDVVHSHYWLSGQVGALARDRWGVPLVHSMHTMAKVKNDALAEGDTPEPAARIIGEEQVVEAADMLVANTDIEAKQLVNMYDADPSRVEVVHPGVDLGVFRPQDRSTARARLGLPEDAAVLLFAGRIQPLKAPDVLLRAVAELLAQTPELRSRLVVPIVGGPSGSGLEHPESLAQLASELGLDGAGGTGPVVRFVPPVSQEELARWCAAATLVAVPSYNESFGLVAAEAQATGTPVVAAAVGGLTTVVRDGRSGLLVDTHDPRDWADALRRVVENDAFRDRLAAGALEQARLFSWEHTARQTLDVYRRARAEIREAV</sequence>
<dbReference type="EC" id="2.4.1.250" evidence="1"/>
<dbReference type="EMBL" id="CP000509">
    <property type="protein sequence ID" value="ABL83547.1"/>
    <property type="molecule type" value="Genomic_DNA"/>
</dbReference>
<dbReference type="SMR" id="A1SP12"/>
<dbReference type="STRING" id="196162.Noca_4050"/>
<dbReference type="CAZy" id="GT4">
    <property type="family name" value="Glycosyltransferase Family 4"/>
</dbReference>
<dbReference type="KEGG" id="nca:Noca_4050"/>
<dbReference type="eggNOG" id="COG0438">
    <property type="taxonomic scope" value="Bacteria"/>
</dbReference>
<dbReference type="HOGENOM" id="CLU_009583_2_3_11"/>
<dbReference type="Proteomes" id="UP000000640">
    <property type="component" value="Chromosome"/>
</dbReference>
<dbReference type="GO" id="GO:0008375">
    <property type="term" value="F:acetylglucosaminyltransferase activity"/>
    <property type="evidence" value="ECO:0007669"/>
    <property type="project" value="UniProtKB-UniRule"/>
</dbReference>
<dbReference type="GO" id="GO:0102710">
    <property type="term" value="F:D-inositol-3-phosphate glycosyltransferase activity"/>
    <property type="evidence" value="ECO:0007669"/>
    <property type="project" value="UniProtKB-EC"/>
</dbReference>
<dbReference type="GO" id="GO:0000287">
    <property type="term" value="F:magnesium ion binding"/>
    <property type="evidence" value="ECO:0007669"/>
    <property type="project" value="UniProtKB-UniRule"/>
</dbReference>
<dbReference type="GO" id="GO:0010125">
    <property type="term" value="P:mycothiol biosynthetic process"/>
    <property type="evidence" value="ECO:0007669"/>
    <property type="project" value="UniProtKB-UniRule"/>
</dbReference>
<dbReference type="CDD" id="cd03800">
    <property type="entry name" value="GT4_sucrose_synthase"/>
    <property type="match status" value="1"/>
</dbReference>
<dbReference type="Gene3D" id="3.40.50.2000">
    <property type="entry name" value="Glycogen Phosphorylase B"/>
    <property type="match status" value="2"/>
</dbReference>
<dbReference type="HAMAP" id="MF_01695">
    <property type="entry name" value="MshA"/>
    <property type="match status" value="1"/>
</dbReference>
<dbReference type="InterPro" id="IPR001296">
    <property type="entry name" value="Glyco_trans_1"/>
</dbReference>
<dbReference type="InterPro" id="IPR028098">
    <property type="entry name" value="Glyco_trans_4-like_N"/>
</dbReference>
<dbReference type="InterPro" id="IPR050194">
    <property type="entry name" value="Glycosyltransferase_grp1"/>
</dbReference>
<dbReference type="InterPro" id="IPR017814">
    <property type="entry name" value="Mycothiol_biosynthesis_MshA"/>
</dbReference>
<dbReference type="NCBIfam" id="TIGR03449">
    <property type="entry name" value="mycothiol_MshA"/>
    <property type="match status" value="1"/>
</dbReference>
<dbReference type="PANTHER" id="PTHR45947">
    <property type="entry name" value="SULFOQUINOVOSYL TRANSFERASE SQD2"/>
    <property type="match status" value="1"/>
</dbReference>
<dbReference type="PANTHER" id="PTHR45947:SF3">
    <property type="entry name" value="SULFOQUINOVOSYL TRANSFERASE SQD2"/>
    <property type="match status" value="1"/>
</dbReference>
<dbReference type="Pfam" id="PF13579">
    <property type="entry name" value="Glyco_trans_4_4"/>
    <property type="match status" value="1"/>
</dbReference>
<dbReference type="Pfam" id="PF00534">
    <property type="entry name" value="Glycos_transf_1"/>
    <property type="match status" value="1"/>
</dbReference>
<dbReference type="SUPFAM" id="SSF53756">
    <property type="entry name" value="UDP-Glycosyltransferase/glycogen phosphorylase"/>
    <property type="match status" value="1"/>
</dbReference>
<evidence type="ECO:0000255" key="1">
    <source>
        <dbReference type="HAMAP-Rule" id="MF_01695"/>
    </source>
</evidence>
<evidence type="ECO:0000256" key="2">
    <source>
        <dbReference type="SAM" id="MobiDB-lite"/>
    </source>
</evidence>
<comment type="function">
    <text evidence="1">Catalyzes the transfer of a N-acetyl-glucosamine moiety to 1D-myo-inositol 3-phosphate to produce 1D-myo-inositol 2-acetamido-2-deoxy-glucopyranoside 3-phosphate in the mycothiol biosynthesis pathway.</text>
</comment>
<comment type="catalytic activity">
    <reaction evidence="1">
        <text>1D-myo-inositol 3-phosphate + UDP-N-acetyl-alpha-D-glucosamine = 1D-myo-inositol 2-acetamido-2-deoxy-alpha-D-glucopyranoside 3-phosphate + UDP + H(+)</text>
        <dbReference type="Rhea" id="RHEA:26188"/>
        <dbReference type="ChEBI" id="CHEBI:15378"/>
        <dbReference type="ChEBI" id="CHEBI:57705"/>
        <dbReference type="ChEBI" id="CHEBI:58223"/>
        <dbReference type="ChEBI" id="CHEBI:58401"/>
        <dbReference type="ChEBI" id="CHEBI:58892"/>
        <dbReference type="EC" id="2.4.1.250"/>
    </reaction>
</comment>
<comment type="subunit">
    <text evidence="1">Homodimer.</text>
</comment>
<comment type="similarity">
    <text evidence="1">Belongs to the glycosyltransferase group 1 family. MshA subfamily.</text>
</comment>
<accession>A1SP12</accession>
<keyword id="KW-0328">Glycosyltransferase</keyword>
<keyword id="KW-0460">Magnesium</keyword>
<keyword id="KW-0479">Metal-binding</keyword>
<keyword id="KW-1185">Reference proteome</keyword>
<keyword id="KW-0808">Transferase</keyword>
<reference key="1">
    <citation type="submission" date="2006-12" db="EMBL/GenBank/DDBJ databases">
        <title>Complete sequence of chromosome 1 of Nocardioides sp. JS614.</title>
        <authorList>
            <person name="Copeland A."/>
            <person name="Lucas S."/>
            <person name="Lapidus A."/>
            <person name="Barry K."/>
            <person name="Detter J.C."/>
            <person name="Glavina del Rio T."/>
            <person name="Hammon N."/>
            <person name="Israni S."/>
            <person name="Dalin E."/>
            <person name="Tice H."/>
            <person name="Pitluck S."/>
            <person name="Thompson L.S."/>
            <person name="Brettin T."/>
            <person name="Bruce D."/>
            <person name="Han C."/>
            <person name="Tapia R."/>
            <person name="Schmutz J."/>
            <person name="Larimer F."/>
            <person name="Land M."/>
            <person name="Hauser L."/>
            <person name="Kyrpides N."/>
            <person name="Kim E."/>
            <person name="Mattes T."/>
            <person name="Gossett J."/>
            <person name="Richardson P."/>
        </authorList>
    </citation>
    <scope>NUCLEOTIDE SEQUENCE [LARGE SCALE GENOMIC DNA]</scope>
    <source>
        <strain>ATCC BAA-499 / JS614</strain>
    </source>
</reference>